<name>RL32_VIBCM</name>
<organism>
    <name type="scientific">Vibrio cholerae serotype O1 (strain M66-2)</name>
    <dbReference type="NCBI Taxonomy" id="579112"/>
    <lineage>
        <taxon>Bacteria</taxon>
        <taxon>Pseudomonadati</taxon>
        <taxon>Pseudomonadota</taxon>
        <taxon>Gammaproteobacteria</taxon>
        <taxon>Vibrionales</taxon>
        <taxon>Vibrionaceae</taxon>
        <taxon>Vibrio</taxon>
    </lineage>
</organism>
<accession>C3LNX6</accession>
<reference key="1">
    <citation type="journal article" date="2008" name="PLoS ONE">
        <title>A recalibrated molecular clock and independent origins for the cholera pandemic clones.</title>
        <authorList>
            <person name="Feng L."/>
            <person name="Reeves P.R."/>
            <person name="Lan R."/>
            <person name="Ren Y."/>
            <person name="Gao C."/>
            <person name="Zhou Z."/>
            <person name="Ren Y."/>
            <person name="Cheng J."/>
            <person name="Wang W."/>
            <person name="Wang J."/>
            <person name="Qian W."/>
            <person name="Li D."/>
            <person name="Wang L."/>
        </authorList>
    </citation>
    <scope>NUCLEOTIDE SEQUENCE [LARGE SCALE GENOMIC DNA]</scope>
    <source>
        <strain>M66-2</strain>
    </source>
</reference>
<gene>
    <name evidence="1" type="primary">rpmF</name>
    <name type="ordered locus">VCM66_1949</name>
</gene>
<proteinExistence type="inferred from homology"/>
<protein>
    <recommendedName>
        <fullName evidence="1">Large ribosomal subunit protein bL32</fullName>
    </recommendedName>
    <alternativeName>
        <fullName evidence="3">50S ribosomal protein L32</fullName>
    </alternativeName>
</protein>
<dbReference type="EMBL" id="CP001233">
    <property type="protein sequence ID" value="ACP06252.1"/>
    <property type="molecule type" value="Genomic_DNA"/>
</dbReference>
<dbReference type="RefSeq" id="WP_000290732.1">
    <property type="nucleotide sequence ID" value="NC_012578.1"/>
</dbReference>
<dbReference type="SMR" id="C3LNX6"/>
<dbReference type="GeneID" id="94025234"/>
<dbReference type="KEGG" id="vcm:VCM66_1949"/>
<dbReference type="HOGENOM" id="CLU_129084_2_1_6"/>
<dbReference type="Proteomes" id="UP000001217">
    <property type="component" value="Chromosome I"/>
</dbReference>
<dbReference type="GO" id="GO:0015934">
    <property type="term" value="C:large ribosomal subunit"/>
    <property type="evidence" value="ECO:0007669"/>
    <property type="project" value="InterPro"/>
</dbReference>
<dbReference type="GO" id="GO:0003735">
    <property type="term" value="F:structural constituent of ribosome"/>
    <property type="evidence" value="ECO:0007669"/>
    <property type="project" value="InterPro"/>
</dbReference>
<dbReference type="GO" id="GO:0006412">
    <property type="term" value="P:translation"/>
    <property type="evidence" value="ECO:0007669"/>
    <property type="project" value="UniProtKB-UniRule"/>
</dbReference>
<dbReference type="HAMAP" id="MF_00340">
    <property type="entry name" value="Ribosomal_bL32"/>
    <property type="match status" value="1"/>
</dbReference>
<dbReference type="InterPro" id="IPR002677">
    <property type="entry name" value="Ribosomal_bL32"/>
</dbReference>
<dbReference type="InterPro" id="IPR044957">
    <property type="entry name" value="Ribosomal_bL32_bact"/>
</dbReference>
<dbReference type="InterPro" id="IPR011332">
    <property type="entry name" value="Ribosomal_zn-bd"/>
</dbReference>
<dbReference type="NCBIfam" id="TIGR01031">
    <property type="entry name" value="rpmF_bact"/>
    <property type="match status" value="1"/>
</dbReference>
<dbReference type="PANTHER" id="PTHR35534">
    <property type="entry name" value="50S RIBOSOMAL PROTEIN L32"/>
    <property type="match status" value="1"/>
</dbReference>
<dbReference type="PANTHER" id="PTHR35534:SF1">
    <property type="entry name" value="LARGE RIBOSOMAL SUBUNIT PROTEIN BL32"/>
    <property type="match status" value="1"/>
</dbReference>
<dbReference type="Pfam" id="PF01783">
    <property type="entry name" value="Ribosomal_L32p"/>
    <property type="match status" value="1"/>
</dbReference>
<dbReference type="SUPFAM" id="SSF57829">
    <property type="entry name" value="Zn-binding ribosomal proteins"/>
    <property type="match status" value="1"/>
</dbReference>
<sequence length="56" mass="6296">MAVQQNRKTRSRRGMRRSHDALTAAALSVDATSGETHLRHNVTAEGYYRGKKVINK</sequence>
<keyword id="KW-0687">Ribonucleoprotein</keyword>
<keyword id="KW-0689">Ribosomal protein</keyword>
<feature type="chain" id="PRO_1000196002" description="Large ribosomal subunit protein bL32">
    <location>
        <begin position="1"/>
        <end position="56"/>
    </location>
</feature>
<feature type="region of interest" description="Disordered" evidence="2">
    <location>
        <begin position="1"/>
        <end position="21"/>
    </location>
</feature>
<feature type="compositionally biased region" description="Basic residues" evidence="2">
    <location>
        <begin position="7"/>
        <end position="16"/>
    </location>
</feature>
<comment type="similarity">
    <text evidence="1">Belongs to the bacterial ribosomal protein bL32 family.</text>
</comment>
<evidence type="ECO:0000255" key="1">
    <source>
        <dbReference type="HAMAP-Rule" id="MF_00340"/>
    </source>
</evidence>
<evidence type="ECO:0000256" key="2">
    <source>
        <dbReference type="SAM" id="MobiDB-lite"/>
    </source>
</evidence>
<evidence type="ECO:0000305" key="3"/>